<feature type="signal peptide" evidence="3">
    <location>
        <begin position="1"/>
        <end position="18"/>
    </location>
</feature>
<feature type="chain" id="PRO_0000004190" description="Calreticulin">
    <location>
        <begin position="19"/>
        <end position="401"/>
    </location>
</feature>
<feature type="repeat" description="1-1">
    <location>
        <begin position="187"/>
        <end position="198"/>
    </location>
</feature>
<feature type="repeat" description="1-2">
    <location>
        <begin position="206"/>
        <end position="217"/>
    </location>
</feature>
<feature type="repeat" description="1-3">
    <location>
        <begin position="223"/>
        <end position="234"/>
    </location>
</feature>
<feature type="repeat" description="1-4">
    <location>
        <begin position="241"/>
        <end position="252"/>
    </location>
</feature>
<feature type="repeat" description="2-1">
    <location>
        <begin position="256"/>
        <end position="266"/>
    </location>
</feature>
<feature type="repeat" description="2-2">
    <location>
        <begin position="270"/>
        <end position="280"/>
    </location>
</feature>
<feature type="repeat" description="2-3">
    <location>
        <begin position="284"/>
        <end position="294"/>
    </location>
</feature>
<feature type="region of interest" description="4 X approximate repeats">
    <location>
        <begin position="187"/>
        <end position="252"/>
    </location>
</feature>
<feature type="region of interest" description="Disordered" evidence="5">
    <location>
        <begin position="199"/>
        <end position="263"/>
    </location>
</feature>
<feature type="region of interest" description="3 X approximate repeats">
    <location>
        <begin position="256"/>
        <end position="294"/>
    </location>
</feature>
<feature type="region of interest" description="Disordered" evidence="5">
    <location>
        <begin position="341"/>
        <end position="401"/>
    </location>
</feature>
<feature type="short sequence motif" description="Prevents secretion from ER" evidence="4">
    <location>
        <begin position="398"/>
        <end position="401"/>
    </location>
</feature>
<feature type="compositionally biased region" description="Basic and acidic residues" evidence="5">
    <location>
        <begin position="199"/>
        <end position="214"/>
    </location>
</feature>
<feature type="compositionally biased region" description="Basic and acidic residues" evidence="5">
    <location>
        <begin position="224"/>
        <end position="236"/>
    </location>
</feature>
<feature type="compositionally biased region" description="Acidic residues" evidence="5">
    <location>
        <begin position="246"/>
        <end position="256"/>
    </location>
</feature>
<feature type="compositionally biased region" description="Basic and acidic residues" evidence="5">
    <location>
        <begin position="348"/>
        <end position="381"/>
    </location>
</feature>
<feature type="compositionally biased region" description="Acidic residues" evidence="5">
    <location>
        <begin position="382"/>
        <end position="401"/>
    </location>
</feature>
<feature type="binding site" evidence="2">
    <location>
        <position position="107"/>
    </location>
    <ligand>
        <name>an alpha-D-glucoside</name>
        <dbReference type="ChEBI" id="CHEBI:22390"/>
    </ligand>
</feature>
<feature type="binding site" evidence="2">
    <location>
        <position position="109"/>
    </location>
    <ligand>
        <name>an alpha-D-glucoside</name>
        <dbReference type="ChEBI" id="CHEBI:22390"/>
    </ligand>
</feature>
<feature type="binding site" evidence="2">
    <location>
        <position position="125"/>
    </location>
    <ligand>
        <name>an alpha-D-glucoside</name>
        <dbReference type="ChEBI" id="CHEBI:22390"/>
    </ligand>
</feature>
<feature type="binding site" evidence="2">
    <location>
        <position position="132"/>
    </location>
    <ligand>
        <name>an alpha-D-glucoside</name>
        <dbReference type="ChEBI" id="CHEBI:22390"/>
    </ligand>
</feature>
<feature type="binding site" evidence="2">
    <location>
        <position position="314"/>
    </location>
    <ligand>
        <name>an alpha-D-glucoside</name>
        <dbReference type="ChEBI" id="CHEBI:22390"/>
    </ligand>
</feature>
<feature type="disulfide bond" evidence="1">
    <location>
        <begin position="103"/>
        <end position="134"/>
    </location>
</feature>
<keyword id="KW-0106">Calcium</keyword>
<keyword id="KW-0143">Chaperone</keyword>
<keyword id="KW-1015">Disulfide bond</keyword>
<keyword id="KW-0256">Endoplasmic reticulum</keyword>
<keyword id="KW-0430">Lectin</keyword>
<keyword id="KW-0479">Metal-binding</keyword>
<keyword id="KW-0677">Repeat</keyword>
<keyword id="KW-0732">Signal</keyword>
<keyword id="KW-0862">Zinc</keyword>
<proteinExistence type="evidence at transcript level"/>
<comment type="function">
    <text evidence="1">Molecular calcium-binding chaperone promoting folding, oligomeric assembly and quality control in the ER via the calreticulin/calnexin cycle. This lectin may interact transiently with almost all of the monoglucosylated glycoproteins that are synthesized in the ER (By similarity).</text>
</comment>
<comment type="subcellular location">
    <subcellularLocation>
        <location evidence="4">Endoplasmic reticulum lumen</location>
    </subcellularLocation>
</comment>
<comment type="domain">
    <text evidence="1">Can be divided into a N-terminal globular domain, a proline-rich P-domain forming an elongated arm-like structure and a C-terminal acidic domain. The P-domain binds one molecule of calcium with high affinity, whereas the acidic C-domain binds multiple calcium ions with low affinity (By similarity).</text>
</comment>
<comment type="domain">
    <text evidence="1">The interaction with glycans occurs through a binding site in the globular lectin domain.</text>
</comment>
<comment type="domain">
    <text evidence="1">The zinc binding sites are localized to the N-domain.</text>
</comment>
<comment type="similarity">
    <text evidence="6">Belongs to the calreticulin family.</text>
</comment>
<name>CALR_EUGGR</name>
<reference key="1">
    <citation type="submission" date="1996-12" db="EMBL/GenBank/DDBJ databases">
        <title>Evidence for conservation of a calcium homeostat component: purification characterization and cloning of calreticulin from Euglena gracilis.</title>
        <authorList>
            <person name="Navazzio L."/>
            <person name="Baldan B."/>
            <person name="Martin W."/>
            <person name="Mariani P."/>
        </authorList>
    </citation>
    <scope>NUCLEOTIDE SEQUENCE [MRNA]</scope>
</reference>
<sequence length="401" mass="45911">MRKELWLGLLLSSQAVLSTIYYKETFEPDWETRWTHSTAKSDYGKFKLTSGKFYGDKAKDAGIQTSQDAKFYAISSPIASSFSNEGKDLVLQFSVKHEQDIDCGGGYLKLLPSVDAAKFTGDTPYHIMFGPDICGATKKIHFILTYKGKNLLWKKEPRCETDTLSHTYTAVIKADRTYEVLVDQVKKESGTLEEDWEILKPKTIPDPEDKKPADWVDEPDMVDPEDKKPEDWDKEPAQIPDPDATQPDDWDEEEDGKWEAPMISNPKYKGEWKAKKIPNPAYKGVWKPRDIPNPEYEADDKVHIFDEIAAVGFDLWQVKSGTIFDNIIVTDSLAEAKAFYDQTNGATKDAEKKAFDSAEADKRKKEEDERKKQEEEEKKTAEEDEDDDDEEEEEDDKKDEL</sequence>
<accession>Q9ZNY3</accession>
<protein>
    <recommendedName>
        <fullName>Calreticulin</fullName>
    </recommendedName>
</protein>
<dbReference type="EMBL" id="Y09816">
    <property type="protein sequence ID" value="CAA70945.1"/>
    <property type="molecule type" value="mRNA"/>
</dbReference>
<dbReference type="SMR" id="Q9ZNY3"/>
<dbReference type="ELM" id="Q9ZNY3"/>
<dbReference type="GO" id="GO:0005788">
    <property type="term" value="C:endoplasmic reticulum lumen"/>
    <property type="evidence" value="ECO:0007669"/>
    <property type="project" value="UniProtKB-SubCell"/>
</dbReference>
<dbReference type="GO" id="GO:0005789">
    <property type="term" value="C:endoplasmic reticulum membrane"/>
    <property type="evidence" value="ECO:0007669"/>
    <property type="project" value="TreeGrafter"/>
</dbReference>
<dbReference type="GO" id="GO:0005509">
    <property type="term" value="F:calcium ion binding"/>
    <property type="evidence" value="ECO:0007669"/>
    <property type="project" value="InterPro"/>
</dbReference>
<dbReference type="GO" id="GO:0030246">
    <property type="term" value="F:carbohydrate binding"/>
    <property type="evidence" value="ECO:0007669"/>
    <property type="project" value="UniProtKB-KW"/>
</dbReference>
<dbReference type="GO" id="GO:0051082">
    <property type="term" value="F:unfolded protein binding"/>
    <property type="evidence" value="ECO:0007669"/>
    <property type="project" value="InterPro"/>
</dbReference>
<dbReference type="GO" id="GO:0036503">
    <property type="term" value="P:ERAD pathway"/>
    <property type="evidence" value="ECO:0007669"/>
    <property type="project" value="TreeGrafter"/>
</dbReference>
<dbReference type="GO" id="GO:0006457">
    <property type="term" value="P:protein folding"/>
    <property type="evidence" value="ECO:0007669"/>
    <property type="project" value="InterPro"/>
</dbReference>
<dbReference type="FunFam" id="2.10.250.10:FF:000002">
    <property type="entry name" value="Calreticulin"/>
    <property type="match status" value="1"/>
</dbReference>
<dbReference type="FunFam" id="2.60.120.200:FF:000018">
    <property type="entry name" value="Calreticulin 1b"/>
    <property type="match status" value="1"/>
</dbReference>
<dbReference type="Gene3D" id="2.60.120.200">
    <property type="match status" value="1"/>
</dbReference>
<dbReference type="Gene3D" id="2.10.250.10">
    <property type="entry name" value="Calreticulin/calnexin, P domain"/>
    <property type="match status" value="1"/>
</dbReference>
<dbReference type="InterPro" id="IPR001580">
    <property type="entry name" value="Calret/calnex"/>
</dbReference>
<dbReference type="InterPro" id="IPR018124">
    <property type="entry name" value="Calret/calnex_CS"/>
</dbReference>
<dbReference type="InterPro" id="IPR009169">
    <property type="entry name" value="Calreticulin"/>
</dbReference>
<dbReference type="InterPro" id="IPR009033">
    <property type="entry name" value="Calreticulin/calnexin_P_dom_sf"/>
</dbReference>
<dbReference type="InterPro" id="IPR013320">
    <property type="entry name" value="ConA-like_dom_sf"/>
</dbReference>
<dbReference type="PANTHER" id="PTHR11073:SF2">
    <property type="entry name" value="CALRETICULIN"/>
    <property type="match status" value="1"/>
</dbReference>
<dbReference type="PANTHER" id="PTHR11073">
    <property type="entry name" value="CALRETICULIN AND CALNEXIN"/>
    <property type="match status" value="1"/>
</dbReference>
<dbReference type="Pfam" id="PF00262">
    <property type="entry name" value="Calreticulin"/>
    <property type="match status" value="2"/>
</dbReference>
<dbReference type="PIRSF" id="PIRSF002356">
    <property type="entry name" value="Calreticulin"/>
    <property type="match status" value="1"/>
</dbReference>
<dbReference type="PRINTS" id="PR00626">
    <property type="entry name" value="CALRETICULIN"/>
</dbReference>
<dbReference type="SUPFAM" id="SSF49899">
    <property type="entry name" value="Concanavalin A-like lectins/glucanases"/>
    <property type="match status" value="1"/>
</dbReference>
<dbReference type="SUPFAM" id="SSF63887">
    <property type="entry name" value="P-domain of calnexin/calreticulin"/>
    <property type="match status" value="1"/>
</dbReference>
<dbReference type="PROSITE" id="PS00803">
    <property type="entry name" value="CALRETICULIN_1"/>
    <property type="match status" value="1"/>
</dbReference>
<dbReference type="PROSITE" id="PS00804">
    <property type="entry name" value="CALRETICULIN_2"/>
    <property type="match status" value="1"/>
</dbReference>
<dbReference type="PROSITE" id="PS00805">
    <property type="entry name" value="CALRETICULIN_REPEAT"/>
    <property type="match status" value="1"/>
</dbReference>
<dbReference type="PROSITE" id="PS00014">
    <property type="entry name" value="ER_TARGET"/>
    <property type="match status" value="1"/>
</dbReference>
<organism>
    <name type="scientific">Euglena gracilis</name>
    <dbReference type="NCBI Taxonomy" id="3039"/>
    <lineage>
        <taxon>Eukaryota</taxon>
        <taxon>Discoba</taxon>
        <taxon>Euglenozoa</taxon>
        <taxon>Euglenida</taxon>
        <taxon>Spirocuta</taxon>
        <taxon>Euglenophyceae</taxon>
        <taxon>Euglenales</taxon>
        <taxon>Euglenaceae</taxon>
        <taxon>Euglena</taxon>
    </lineage>
</organism>
<evidence type="ECO:0000250" key="1"/>
<evidence type="ECO:0000250" key="2">
    <source>
        <dbReference type="UniProtKB" id="P14211"/>
    </source>
</evidence>
<evidence type="ECO:0000255" key="3"/>
<evidence type="ECO:0000255" key="4">
    <source>
        <dbReference type="PROSITE-ProRule" id="PRU10138"/>
    </source>
</evidence>
<evidence type="ECO:0000256" key="5">
    <source>
        <dbReference type="SAM" id="MobiDB-lite"/>
    </source>
</evidence>
<evidence type="ECO:0000305" key="6"/>